<comment type="function">
    <text evidence="1">Peptide chain release factor 1 directs the termination of translation in response to the peptide chain termination codons UAG and UAA.</text>
</comment>
<comment type="subcellular location">
    <subcellularLocation>
        <location evidence="1">Cytoplasm</location>
    </subcellularLocation>
</comment>
<comment type="PTM">
    <text evidence="1">Methylated by PrmC. Methylation increases the termination efficiency of RF1.</text>
</comment>
<comment type="similarity">
    <text evidence="1">Belongs to the prokaryotic/mitochondrial release factor family.</text>
</comment>
<protein>
    <recommendedName>
        <fullName evidence="1">Peptide chain release factor 1</fullName>
        <shortName evidence="1">RF-1</shortName>
    </recommendedName>
</protein>
<evidence type="ECO:0000255" key="1">
    <source>
        <dbReference type="HAMAP-Rule" id="MF_00093"/>
    </source>
</evidence>
<evidence type="ECO:0000256" key="2">
    <source>
        <dbReference type="SAM" id="MobiDB-lite"/>
    </source>
</evidence>
<dbReference type="EMBL" id="CP000087">
    <property type="protein sequence ID" value="ABE04379.1"/>
    <property type="molecule type" value="Genomic_DNA"/>
</dbReference>
<dbReference type="RefSeq" id="WP_011476990.1">
    <property type="nucleotide sequence ID" value="NC_007940.1"/>
</dbReference>
<dbReference type="SMR" id="Q1RJT5"/>
<dbReference type="KEGG" id="rbe:RBE_0298"/>
<dbReference type="eggNOG" id="COG0216">
    <property type="taxonomic scope" value="Bacteria"/>
</dbReference>
<dbReference type="HOGENOM" id="CLU_036856_0_1_5"/>
<dbReference type="OrthoDB" id="9806673at2"/>
<dbReference type="Proteomes" id="UP000001951">
    <property type="component" value="Chromosome"/>
</dbReference>
<dbReference type="GO" id="GO:0005737">
    <property type="term" value="C:cytoplasm"/>
    <property type="evidence" value="ECO:0007669"/>
    <property type="project" value="UniProtKB-SubCell"/>
</dbReference>
<dbReference type="GO" id="GO:0016149">
    <property type="term" value="F:translation release factor activity, codon specific"/>
    <property type="evidence" value="ECO:0007669"/>
    <property type="project" value="UniProtKB-UniRule"/>
</dbReference>
<dbReference type="FunFam" id="3.30.160.20:FF:000004">
    <property type="entry name" value="Peptide chain release factor 1"/>
    <property type="match status" value="1"/>
</dbReference>
<dbReference type="FunFam" id="3.30.70.1660:FF:000002">
    <property type="entry name" value="Peptide chain release factor 1"/>
    <property type="match status" value="1"/>
</dbReference>
<dbReference type="FunFam" id="3.30.70.1660:FF:000004">
    <property type="entry name" value="Peptide chain release factor 1"/>
    <property type="match status" value="1"/>
</dbReference>
<dbReference type="Gene3D" id="3.30.160.20">
    <property type="match status" value="1"/>
</dbReference>
<dbReference type="Gene3D" id="3.30.70.1660">
    <property type="match status" value="1"/>
</dbReference>
<dbReference type="Gene3D" id="6.10.140.1950">
    <property type="match status" value="1"/>
</dbReference>
<dbReference type="HAMAP" id="MF_00093">
    <property type="entry name" value="Rel_fac_1"/>
    <property type="match status" value="1"/>
</dbReference>
<dbReference type="InterPro" id="IPR005139">
    <property type="entry name" value="PCRF"/>
</dbReference>
<dbReference type="InterPro" id="IPR000352">
    <property type="entry name" value="Pep_chain_release_fac_I"/>
</dbReference>
<dbReference type="InterPro" id="IPR045853">
    <property type="entry name" value="Pep_chain_release_fac_I_sf"/>
</dbReference>
<dbReference type="InterPro" id="IPR050057">
    <property type="entry name" value="Prokaryotic/Mito_RF"/>
</dbReference>
<dbReference type="InterPro" id="IPR004373">
    <property type="entry name" value="RF-1"/>
</dbReference>
<dbReference type="NCBIfam" id="TIGR00019">
    <property type="entry name" value="prfA"/>
    <property type="match status" value="1"/>
</dbReference>
<dbReference type="NCBIfam" id="NF001859">
    <property type="entry name" value="PRK00591.1"/>
    <property type="match status" value="1"/>
</dbReference>
<dbReference type="PANTHER" id="PTHR43804">
    <property type="entry name" value="LD18447P"/>
    <property type="match status" value="1"/>
</dbReference>
<dbReference type="PANTHER" id="PTHR43804:SF7">
    <property type="entry name" value="LD18447P"/>
    <property type="match status" value="1"/>
</dbReference>
<dbReference type="Pfam" id="PF03462">
    <property type="entry name" value="PCRF"/>
    <property type="match status" value="1"/>
</dbReference>
<dbReference type="Pfam" id="PF00472">
    <property type="entry name" value="RF-1"/>
    <property type="match status" value="1"/>
</dbReference>
<dbReference type="SMART" id="SM00937">
    <property type="entry name" value="PCRF"/>
    <property type="match status" value="1"/>
</dbReference>
<dbReference type="SUPFAM" id="SSF75620">
    <property type="entry name" value="Release factor"/>
    <property type="match status" value="1"/>
</dbReference>
<dbReference type="PROSITE" id="PS00745">
    <property type="entry name" value="RF_PROK_I"/>
    <property type="match status" value="1"/>
</dbReference>
<accession>Q1RJT5</accession>
<name>RF1_RICBR</name>
<gene>
    <name evidence="1" type="primary">prfA</name>
    <name type="ordered locus">RBE_0298</name>
</gene>
<proteinExistence type="inferred from homology"/>
<reference key="1">
    <citation type="journal article" date="2006" name="PLoS Genet.">
        <title>Genome sequence of Rickettsia bellii illuminates the role of amoebae in gene exchanges between intracellular pathogens.</title>
        <authorList>
            <person name="Ogata H."/>
            <person name="La Scola B."/>
            <person name="Audic S."/>
            <person name="Renesto P."/>
            <person name="Blanc G."/>
            <person name="Robert C."/>
            <person name="Fournier P.-E."/>
            <person name="Claverie J.-M."/>
            <person name="Raoult D."/>
        </authorList>
    </citation>
    <scope>NUCLEOTIDE SEQUENCE [LARGE SCALE GENOMIC DNA]</scope>
    <source>
        <strain>RML369-C</strain>
    </source>
</reference>
<organism>
    <name type="scientific">Rickettsia bellii (strain RML369-C)</name>
    <dbReference type="NCBI Taxonomy" id="336407"/>
    <lineage>
        <taxon>Bacteria</taxon>
        <taxon>Pseudomonadati</taxon>
        <taxon>Pseudomonadota</taxon>
        <taxon>Alphaproteobacteria</taxon>
        <taxon>Rickettsiales</taxon>
        <taxon>Rickettsiaceae</taxon>
        <taxon>Rickettsieae</taxon>
        <taxon>Rickettsia</taxon>
        <taxon>belli group</taxon>
    </lineage>
</organism>
<keyword id="KW-0963">Cytoplasm</keyword>
<keyword id="KW-0488">Methylation</keyword>
<keyword id="KW-0648">Protein biosynthesis</keyword>
<feature type="chain" id="PRO_0000263339" description="Peptide chain release factor 1">
    <location>
        <begin position="1"/>
        <end position="357"/>
    </location>
</feature>
<feature type="region of interest" description="Disordered" evidence="2">
    <location>
        <begin position="284"/>
        <end position="313"/>
    </location>
</feature>
<feature type="compositionally biased region" description="Basic and acidic residues" evidence="2">
    <location>
        <begin position="284"/>
        <end position="293"/>
    </location>
</feature>
<feature type="modified residue" description="N5-methylglutamine" evidence="1">
    <location>
        <position position="236"/>
    </location>
</feature>
<sequence length="357" mass="40217">MNISSFSDNLTKILGKYEDLSEKLSSGIGGEEFVKASKEYADLEDIVQKIKEYNKAKAELEEANNFKQEPSLDKATLEMIEEEIRNLEDSLPTLERSVKIALLPKDEADSKSAIIEIRAGTGGEEAALFAAKLFNMYQRYAELKGWRFEILSIDETGIGGYKEVSASIKGKDVFSKLKFESGVHRVQRVPETESQGRIHTSAATVAVLPEVEDVDIKLEEKDLRIDTYRASGAGGQHVNTTDSAVRITHIPTGITVALQDEKSQHKNKAKALKILRARIYEEERRKKDQERANNRRKQIGSGDRSERIRTYNFPQGRVSDHRINLTLYKIDEVINGQLDEFIEALIANDEAKKLSDI</sequence>